<feature type="chain" id="PRO_0000100320" description="Temperature acclimation protein A">
    <location>
        <begin position="1" status="less than"/>
        <end position="59"/>
    </location>
</feature>
<feature type="domain" description="CSD">
    <location>
        <begin position="1" status="less than"/>
        <end position="55"/>
    </location>
</feature>
<feature type="non-terminal residue">
    <location>
        <position position="1"/>
    </location>
</feature>
<gene>
    <name type="primary">tapA</name>
</gene>
<accession>P72191</accession>
<dbReference type="EMBL" id="U62987">
    <property type="protein sequence ID" value="AAC45999.1"/>
    <property type="molecule type" value="Genomic_DNA"/>
</dbReference>
<dbReference type="SMR" id="P72191"/>
<dbReference type="GO" id="GO:0005829">
    <property type="term" value="C:cytosol"/>
    <property type="evidence" value="ECO:0007669"/>
    <property type="project" value="UniProtKB-ARBA"/>
</dbReference>
<dbReference type="GO" id="GO:0003677">
    <property type="term" value="F:DNA binding"/>
    <property type="evidence" value="ECO:0007669"/>
    <property type="project" value="UniProtKB-KW"/>
</dbReference>
<dbReference type="CDD" id="cd04458">
    <property type="entry name" value="CSP_CDS"/>
    <property type="match status" value="1"/>
</dbReference>
<dbReference type="Gene3D" id="2.40.50.140">
    <property type="entry name" value="Nucleic acid-binding proteins"/>
    <property type="match status" value="1"/>
</dbReference>
<dbReference type="InterPro" id="IPR012156">
    <property type="entry name" value="Cold_shock_CspA"/>
</dbReference>
<dbReference type="InterPro" id="IPR050181">
    <property type="entry name" value="Cold_shock_domain"/>
</dbReference>
<dbReference type="InterPro" id="IPR011129">
    <property type="entry name" value="CSD"/>
</dbReference>
<dbReference type="InterPro" id="IPR019844">
    <property type="entry name" value="CSD_CS"/>
</dbReference>
<dbReference type="InterPro" id="IPR002059">
    <property type="entry name" value="CSP_DNA-bd"/>
</dbReference>
<dbReference type="InterPro" id="IPR012340">
    <property type="entry name" value="NA-bd_OB-fold"/>
</dbReference>
<dbReference type="PANTHER" id="PTHR11544">
    <property type="entry name" value="COLD SHOCK DOMAIN CONTAINING PROTEINS"/>
    <property type="match status" value="1"/>
</dbReference>
<dbReference type="Pfam" id="PF00313">
    <property type="entry name" value="CSD"/>
    <property type="match status" value="1"/>
</dbReference>
<dbReference type="PIRSF" id="PIRSF002599">
    <property type="entry name" value="Cold_shock_A"/>
    <property type="match status" value="1"/>
</dbReference>
<dbReference type="PRINTS" id="PR00050">
    <property type="entry name" value="COLDSHOCK"/>
</dbReference>
<dbReference type="SMART" id="SM00357">
    <property type="entry name" value="CSP"/>
    <property type="match status" value="1"/>
</dbReference>
<dbReference type="SUPFAM" id="SSF50249">
    <property type="entry name" value="Nucleic acid-binding proteins"/>
    <property type="match status" value="1"/>
</dbReference>
<dbReference type="PROSITE" id="PS00352">
    <property type="entry name" value="CSD_1"/>
    <property type="match status" value="1"/>
</dbReference>
<dbReference type="PROSITE" id="PS51857">
    <property type="entry name" value="CSD_2"/>
    <property type="match status" value="1"/>
</dbReference>
<proteinExistence type="evidence at transcript level"/>
<organism>
    <name type="scientific">Pseudomonas fragi</name>
    <dbReference type="NCBI Taxonomy" id="296"/>
    <lineage>
        <taxon>Bacteria</taxon>
        <taxon>Pseudomonadati</taxon>
        <taxon>Pseudomonadota</taxon>
        <taxon>Gammaproteobacteria</taxon>
        <taxon>Pseudomonadales</taxon>
        <taxon>Pseudomonadaceae</taxon>
        <taxon>Pseudomonas</taxon>
    </lineage>
</organism>
<keyword id="KW-0010">Activator</keyword>
<keyword id="KW-0963">Cytoplasm</keyword>
<keyword id="KW-0238">DNA-binding</keyword>
<keyword id="KW-0346">Stress response</keyword>
<keyword id="KW-0804">Transcription</keyword>
<keyword id="KW-0805">Transcription regulation</keyword>
<sequence>FNDEKGFGFITPESGPDLFVHFRAIQGNGFKSLKEGQKVTFIAVQGQKGMQADKVQAEA</sequence>
<name>TAPA_PSEFR</name>
<reference key="1">
    <citation type="journal article" date="1997" name="J. Bacteriol.">
        <title>The cold shock response of the psychrotrophic bacterium Pseudomonas fragi involves four low-molecular-mass nucleic acid-binding proteins.</title>
        <authorList>
            <person name="Michel V."/>
            <person name="Lehoux I."/>
            <person name="Depret G."/>
            <person name="Anglade P."/>
            <person name="Labadie J."/>
            <person name="Hebraud M."/>
        </authorList>
    </citation>
    <scope>NUCLEOTIDE SEQUENCE [GENOMIC DNA]</scope>
    <source>
        <strain>K1</strain>
    </source>
</reference>
<evidence type="ECO:0000250" key="1"/>
<comment type="function">
    <text>Affects cell viability at low temperatures.</text>
</comment>
<comment type="subcellular location">
    <subcellularLocation>
        <location evidence="1">Cytoplasm</location>
    </subcellularLocation>
</comment>
<comment type="induction">
    <text>In response to low temperature.</text>
</comment>
<protein>
    <recommendedName>
        <fullName>Temperature acclimation protein A</fullName>
    </recommendedName>
    <alternativeName>
        <fullName>E7.0</fullName>
    </alternativeName>
</protein>